<feature type="chain" id="PRO_0000130641" description="Large ribosomal subunit protein uL24">
    <location>
        <begin position="1"/>
        <end position="111"/>
    </location>
</feature>
<keyword id="KW-0687">Ribonucleoprotein</keyword>
<keyword id="KW-0689">Ribosomal protein</keyword>
<keyword id="KW-0694">RNA-binding</keyword>
<keyword id="KW-0699">rRNA-binding</keyword>
<protein>
    <recommendedName>
        <fullName evidence="1">Large ribosomal subunit protein uL24</fullName>
    </recommendedName>
    <alternativeName>
        <fullName evidence="2">50S ribosomal protein L24</fullName>
    </alternativeName>
</protein>
<organism>
    <name type="scientific">Chlamydia muridarum (strain MoPn / Nigg)</name>
    <dbReference type="NCBI Taxonomy" id="243161"/>
    <lineage>
        <taxon>Bacteria</taxon>
        <taxon>Pseudomonadati</taxon>
        <taxon>Chlamydiota</taxon>
        <taxon>Chlamydiia</taxon>
        <taxon>Chlamydiales</taxon>
        <taxon>Chlamydiaceae</taxon>
        <taxon>Chlamydia/Chlamydophila group</taxon>
        <taxon>Chlamydia</taxon>
    </lineage>
</organism>
<dbReference type="EMBL" id="AE002160">
    <property type="protein sequence ID" value="AAF39607.1"/>
    <property type="molecule type" value="Genomic_DNA"/>
</dbReference>
<dbReference type="PIR" id="D81664">
    <property type="entry name" value="D81664"/>
</dbReference>
<dbReference type="RefSeq" id="WP_009872719.1">
    <property type="nucleotide sequence ID" value="NZ_CP063055.1"/>
</dbReference>
<dbReference type="SMR" id="Q9PJM5"/>
<dbReference type="GeneID" id="1246171"/>
<dbReference type="KEGG" id="cmu:TC_0804"/>
<dbReference type="eggNOG" id="COG0198">
    <property type="taxonomic scope" value="Bacteria"/>
</dbReference>
<dbReference type="HOGENOM" id="CLU_093315_2_0_0"/>
<dbReference type="OrthoDB" id="9807419at2"/>
<dbReference type="Proteomes" id="UP000000800">
    <property type="component" value="Chromosome"/>
</dbReference>
<dbReference type="GO" id="GO:1990904">
    <property type="term" value="C:ribonucleoprotein complex"/>
    <property type="evidence" value="ECO:0007669"/>
    <property type="project" value="UniProtKB-KW"/>
</dbReference>
<dbReference type="GO" id="GO:0005840">
    <property type="term" value="C:ribosome"/>
    <property type="evidence" value="ECO:0007669"/>
    <property type="project" value="UniProtKB-KW"/>
</dbReference>
<dbReference type="GO" id="GO:0019843">
    <property type="term" value="F:rRNA binding"/>
    <property type="evidence" value="ECO:0007669"/>
    <property type="project" value="UniProtKB-UniRule"/>
</dbReference>
<dbReference type="GO" id="GO:0003735">
    <property type="term" value="F:structural constituent of ribosome"/>
    <property type="evidence" value="ECO:0007669"/>
    <property type="project" value="InterPro"/>
</dbReference>
<dbReference type="GO" id="GO:0006412">
    <property type="term" value="P:translation"/>
    <property type="evidence" value="ECO:0007669"/>
    <property type="project" value="UniProtKB-UniRule"/>
</dbReference>
<dbReference type="CDD" id="cd06089">
    <property type="entry name" value="KOW_RPL26"/>
    <property type="match status" value="1"/>
</dbReference>
<dbReference type="Gene3D" id="2.30.30.30">
    <property type="match status" value="1"/>
</dbReference>
<dbReference type="HAMAP" id="MF_01326_B">
    <property type="entry name" value="Ribosomal_uL24_B"/>
    <property type="match status" value="1"/>
</dbReference>
<dbReference type="InterPro" id="IPR005824">
    <property type="entry name" value="KOW"/>
</dbReference>
<dbReference type="InterPro" id="IPR014722">
    <property type="entry name" value="Rib_uL2_dom2"/>
</dbReference>
<dbReference type="InterPro" id="IPR003256">
    <property type="entry name" value="Ribosomal_uL24"/>
</dbReference>
<dbReference type="InterPro" id="IPR005825">
    <property type="entry name" value="Ribosomal_uL24_CS"/>
</dbReference>
<dbReference type="InterPro" id="IPR041988">
    <property type="entry name" value="Ribosomal_uL24_KOW"/>
</dbReference>
<dbReference type="InterPro" id="IPR008991">
    <property type="entry name" value="Translation_prot_SH3-like_sf"/>
</dbReference>
<dbReference type="NCBIfam" id="TIGR01079">
    <property type="entry name" value="rplX_bact"/>
    <property type="match status" value="1"/>
</dbReference>
<dbReference type="PANTHER" id="PTHR12903">
    <property type="entry name" value="MITOCHONDRIAL RIBOSOMAL PROTEIN L24"/>
    <property type="match status" value="1"/>
</dbReference>
<dbReference type="Pfam" id="PF00467">
    <property type="entry name" value="KOW"/>
    <property type="match status" value="1"/>
</dbReference>
<dbReference type="Pfam" id="PF17136">
    <property type="entry name" value="ribosomal_L24"/>
    <property type="match status" value="1"/>
</dbReference>
<dbReference type="SMART" id="SM00739">
    <property type="entry name" value="KOW"/>
    <property type="match status" value="1"/>
</dbReference>
<dbReference type="SUPFAM" id="SSF50104">
    <property type="entry name" value="Translation proteins SH3-like domain"/>
    <property type="match status" value="1"/>
</dbReference>
<dbReference type="PROSITE" id="PS01108">
    <property type="entry name" value="RIBOSOMAL_L24"/>
    <property type="match status" value="1"/>
</dbReference>
<sequence>MKRRSVCVGDTVYVLAGNDKGKQGKVLRCLKDKVVVEGINVRVKNIKRSQENPKGKRINIEAPLHISNVRLSIDNQPARLFVKVTEKGRELWNKHSDGSSSLYRLVRERKG</sequence>
<proteinExistence type="inferred from homology"/>
<accession>Q9PJM5</accession>
<comment type="function">
    <text evidence="1">One of two assembly initiator proteins, it binds directly to the 5'-end of the 23S rRNA, where it nucleates assembly of the 50S subunit.</text>
</comment>
<comment type="function">
    <text evidence="1">One of the proteins that surrounds the polypeptide exit tunnel on the outside of the subunit.</text>
</comment>
<comment type="subunit">
    <text evidence="1">Part of the 50S ribosomal subunit.</text>
</comment>
<comment type="similarity">
    <text evidence="1">Belongs to the universal ribosomal protein uL24 family.</text>
</comment>
<evidence type="ECO:0000255" key="1">
    <source>
        <dbReference type="HAMAP-Rule" id="MF_01326"/>
    </source>
</evidence>
<evidence type="ECO:0000305" key="2"/>
<reference key="1">
    <citation type="journal article" date="2000" name="Nucleic Acids Res.">
        <title>Genome sequences of Chlamydia trachomatis MoPn and Chlamydia pneumoniae AR39.</title>
        <authorList>
            <person name="Read T.D."/>
            <person name="Brunham R.C."/>
            <person name="Shen C."/>
            <person name="Gill S.R."/>
            <person name="Heidelberg J.F."/>
            <person name="White O."/>
            <person name="Hickey E.K."/>
            <person name="Peterson J.D."/>
            <person name="Utterback T.R."/>
            <person name="Berry K.J."/>
            <person name="Bass S."/>
            <person name="Linher K.D."/>
            <person name="Weidman J.F."/>
            <person name="Khouri H.M."/>
            <person name="Craven B."/>
            <person name="Bowman C."/>
            <person name="Dodson R.J."/>
            <person name="Gwinn M.L."/>
            <person name="Nelson W.C."/>
            <person name="DeBoy R.T."/>
            <person name="Kolonay J.F."/>
            <person name="McClarty G."/>
            <person name="Salzberg S.L."/>
            <person name="Eisen J.A."/>
            <person name="Fraser C.M."/>
        </authorList>
    </citation>
    <scope>NUCLEOTIDE SEQUENCE [LARGE SCALE GENOMIC DNA]</scope>
    <source>
        <strain>MoPn / Nigg</strain>
    </source>
</reference>
<name>RL24_CHLMU</name>
<gene>
    <name evidence="1" type="primary">rplX</name>
    <name type="ordered locus">TC_0804</name>
</gene>